<organism>
    <name type="scientific">Acinetobacter baylyi (strain ATCC 33305 / BD413 / ADP1)</name>
    <dbReference type="NCBI Taxonomy" id="62977"/>
    <lineage>
        <taxon>Bacteria</taxon>
        <taxon>Pseudomonadati</taxon>
        <taxon>Pseudomonadota</taxon>
        <taxon>Gammaproteobacteria</taxon>
        <taxon>Moraxellales</taxon>
        <taxon>Moraxellaceae</taxon>
        <taxon>Acinetobacter</taxon>
    </lineage>
</organism>
<feature type="chain" id="PRO_0000226153" description="Ketol-acid reductoisomerase (NADP(+))">
    <location>
        <begin position="1"/>
        <end position="338"/>
    </location>
</feature>
<feature type="domain" description="KARI N-terminal Rossmann" evidence="2">
    <location>
        <begin position="1"/>
        <end position="181"/>
    </location>
</feature>
<feature type="domain" description="KARI C-terminal knotted" evidence="3">
    <location>
        <begin position="182"/>
        <end position="327"/>
    </location>
</feature>
<feature type="active site" evidence="1">
    <location>
        <position position="107"/>
    </location>
</feature>
<feature type="binding site" evidence="1">
    <location>
        <begin position="24"/>
        <end position="27"/>
    </location>
    <ligand>
        <name>NADP(+)</name>
        <dbReference type="ChEBI" id="CHEBI:58349"/>
    </ligand>
</feature>
<feature type="binding site" evidence="1">
    <location>
        <position position="47"/>
    </location>
    <ligand>
        <name>NADP(+)</name>
        <dbReference type="ChEBI" id="CHEBI:58349"/>
    </ligand>
</feature>
<feature type="binding site" evidence="1">
    <location>
        <position position="50"/>
    </location>
    <ligand>
        <name>NADP(+)</name>
        <dbReference type="ChEBI" id="CHEBI:58349"/>
    </ligand>
</feature>
<feature type="binding site" evidence="1">
    <location>
        <position position="52"/>
    </location>
    <ligand>
        <name>NADP(+)</name>
        <dbReference type="ChEBI" id="CHEBI:58349"/>
    </ligand>
</feature>
<feature type="binding site" evidence="1">
    <location>
        <begin position="82"/>
        <end position="85"/>
    </location>
    <ligand>
        <name>NADP(+)</name>
        <dbReference type="ChEBI" id="CHEBI:58349"/>
    </ligand>
</feature>
<feature type="binding site" evidence="1">
    <location>
        <position position="133"/>
    </location>
    <ligand>
        <name>NADP(+)</name>
        <dbReference type="ChEBI" id="CHEBI:58349"/>
    </ligand>
</feature>
<feature type="binding site" evidence="1">
    <location>
        <position position="190"/>
    </location>
    <ligand>
        <name>Mg(2+)</name>
        <dbReference type="ChEBI" id="CHEBI:18420"/>
        <label>1</label>
    </ligand>
</feature>
<feature type="binding site" evidence="1">
    <location>
        <position position="190"/>
    </location>
    <ligand>
        <name>Mg(2+)</name>
        <dbReference type="ChEBI" id="CHEBI:18420"/>
        <label>2</label>
    </ligand>
</feature>
<feature type="binding site" evidence="1">
    <location>
        <position position="194"/>
    </location>
    <ligand>
        <name>Mg(2+)</name>
        <dbReference type="ChEBI" id="CHEBI:18420"/>
        <label>1</label>
    </ligand>
</feature>
<feature type="binding site" evidence="1">
    <location>
        <position position="226"/>
    </location>
    <ligand>
        <name>Mg(2+)</name>
        <dbReference type="ChEBI" id="CHEBI:18420"/>
        <label>2</label>
    </ligand>
</feature>
<feature type="binding site" evidence="1">
    <location>
        <position position="230"/>
    </location>
    <ligand>
        <name>Mg(2+)</name>
        <dbReference type="ChEBI" id="CHEBI:18420"/>
        <label>2</label>
    </ligand>
</feature>
<feature type="binding site" evidence="1">
    <location>
        <position position="251"/>
    </location>
    <ligand>
        <name>substrate</name>
    </ligand>
</feature>
<reference key="1">
    <citation type="journal article" date="2004" name="Nucleic Acids Res.">
        <title>Unique features revealed by the genome sequence of Acinetobacter sp. ADP1, a versatile and naturally transformation competent bacterium.</title>
        <authorList>
            <person name="Barbe V."/>
            <person name="Vallenet D."/>
            <person name="Fonknechten N."/>
            <person name="Kreimeyer A."/>
            <person name="Oztas S."/>
            <person name="Labarre L."/>
            <person name="Cruveiller S."/>
            <person name="Robert C."/>
            <person name="Duprat S."/>
            <person name="Wincker P."/>
            <person name="Ornston L.N."/>
            <person name="Weissenbach J."/>
            <person name="Marliere P."/>
            <person name="Cohen G.N."/>
            <person name="Medigue C."/>
        </authorList>
    </citation>
    <scope>NUCLEOTIDE SEQUENCE [LARGE SCALE GENOMIC DNA]</scope>
    <source>
        <strain>ATCC 33305 / BD413 / ADP1</strain>
    </source>
</reference>
<protein>
    <recommendedName>
        <fullName evidence="1">Ketol-acid reductoisomerase (NADP(+))</fullName>
        <shortName evidence="1">KARI</shortName>
        <ecNumber evidence="1">1.1.1.86</ecNumber>
    </recommendedName>
    <alternativeName>
        <fullName evidence="1">Acetohydroxy-acid isomeroreductase</fullName>
        <shortName evidence="1">AHIR</shortName>
    </alternativeName>
    <alternativeName>
        <fullName evidence="1">Alpha-keto-beta-hydroxylacyl reductoisomerase</fullName>
    </alternativeName>
    <alternativeName>
        <fullName evidence="1">Ketol-acid reductoisomerase type 1</fullName>
    </alternativeName>
    <alternativeName>
        <fullName evidence="1">Ketol-acid reductoisomerase type I</fullName>
    </alternativeName>
</protein>
<evidence type="ECO:0000255" key="1">
    <source>
        <dbReference type="HAMAP-Rule" id="MF_00435"/>
    </source>
</evidence>
<evidence type="ECO:0000255" key="2">
    <source>
        <dbReference type="PROSITE-ProRule" id="PRU01197"/>
    </source>
</evidence>
<evidence type="ECO:0000255" key="3">
    <source>
        <dbReference type="PROSITE-ProRule" id="PRU01198"/>
    </source>
</evidence>
<accession>Q6F821</accession>
<proteinExistence type="inferred from homology"/>
<comment type="function">
    <text evidence="1">Involved in the biosynthesis of branched-chain amino acids (BCAA). Catalyzes an alkyl-migration followed by a ketol-acid reduction of (S)-2-acetolactate (S2AL) to yield (R)-2,3-dihydroxy-isovalerate. In the isomerase reaction, S2AL is rearranged via a Mg-dependent methyl migration to produce 3-hydroxy-3-methyl-2-ketobutyrate (HMKB). In the reductase reaction, this 2-ketoacid undergoes a metal-dependent reduction by NADPH to yield (R)-2,3-dihydroxy-isovalerate.</text>
</comment>
<comment type="catalytic activity">
    <reaction evidence="1">
        <text>(2R)-2,3-dihydroxy-3-methylbutanoate + NADP(+) = (2S)-2-acetolactate + NADPH + H(+)</text>
        <dbReference type="Rhea" id="RHEA:22068"/>
        <dbReference type="ChEBI" id="CHEBI:15378"/>
        <dbReference type="ChEBI" id="CHEBI:49072"/>
        <dbReference type="ChEBI" id="CHEBI:57783"/>
        <dbReference type="ChEBI" id="CHEBI:58349"/>
        <dbReference type="ChEBI" id="CHEBI:58476"/>
        <dbReference type="EC" id="1.1.1.86"/>
    </reaction>
</comment>
<comment type="catalytic activity">
    <reaction evidence="1">
        <text>(2R,3R)-2,3-dihydroxy-3-methylpentanoate + NADP(+) = (S)-2-ethyl-2-hydroxy-3-oxobutanoate + NADPH + H(+)</text>
        <dbReference type="Rhea" id="RHEA:13493"/>
        <dbReference type="ChEBI" id="CHEBI:15378"/>
        <dbReference type="ChEBI" id="CHEBI:49256"/>
        <dbReference type="ChEBI" id="CHEBI:49258"/>
        <dbReference type="ChEBI" id="CHEBI:57783"/>
        <dbReference type="ChEBI" id="CHEBI:58349"/>
        <dbReference type="EC" id="1.1.1.86"/>
    </reaction>
</comment>
<comment type="cofactor">
    <cofactor evidence="1">
        <name>Mg(2+)</name>
        <dbReference type="ChEBI" id="CHEBI:18420"/>
    </cofactor>
    <text evidence="1">Binds 2 magnesium ions per subunit.</text>
</comment>
<comment type="pathway">
    <text evidence="1">Amino-acid biosynthesis; L-isoleucine biosynthesis; L-isoleucine from 2-oxobutanoate: step 2/4.</text>
</comment>
<comment type="pathway">
    <text evidence="1">Amino-acid biosynthesis; L-valine biosynthesis; L-valine from pyruvate: step 2/4.</text>
</comment>
<comment type="similarity">
    <text evidence="1">Belongs to the ketol-acid reductoisomerase family.</text>
</comment>
<keyword id="KW-0028">Amino-acid biosynthesis</keyword>
<keyword id="KW-0100">Branched-chain amino acid biosynthesis</keyword>
<keyword id="KW-0460">Magnesium</keyword>
<keyword id="KW-0479">Metal-binding</keyword>
<keyword id="KW-0521">NADP</keyword>
<keyword id="KW-0560">Oxidoreductase</keyword>
<name>ILVC_ACIAD</name>
<sequence length="338" mass="36943">MQIFYDKDCDLSIIQGKKVAIIGYGSQGHAHALNLKDSGVDVTVGLRANSASWKKAENAGLKVAEVPEAVKQADLVMILTPDEFQSQLYRDVIEPNIKEGATLAFAHGFSVLYNQVVPRQDLDVIMVAPKAPGHTVRSEFQRGSGVPDLIAIHQDASGNARNVALSYASGVGGGRTGIIETSFREETETDLFGEQAVLCGGAVELVKMGFETLVEAGYSPEMAYFECLHELKLIVDLMFEGGIADMNYSVSNNAEYGEYVTGVEVINEQSREAMRNALKRIQSGEYAKMFIQEGALNYPSMTARRRQNAAHGIEVTGSKLRAMMPWIQANKIVDKEKN</sequence>
<gene>
    <name evidence="1" type="primary">ilvC</name>
    <name type="ordered locus">ACIAD3102</name>
</gene>
<dbReference type="EC" id="1.1.1.86" evidence="1"/>
<dbReference type="EMBL" id="CR543861">
    <property type="protein sequence ID" value="CAG69794.1"/>
    <property type="molecule type" value="Genomic_DNA"/>
</dbReference>
<dbReference type="RefSeq" id="WP_004924416.1">
    <property type="nucleotide sequence ID" value="NC_005966.1"/>
</dbReference>
<dbReference type="SMR" id="Q6F821"/>
<dbReference type="STRING" id="202950.GCA_001485005_02754"/>
<dbReference type="GeneID" id="45235316"/>
<dbReference type="KEGG" id="aci:ACIAD3102"/>
<dbReference type="eggNOG" id="COG0059">
    <property type="taxonomic scope" value="Bacteria"/>
</dbReference>
<dbReference type="HOGENOM" id="CLU_033821_0_1_6"/>
<dbReference type="OrthoDB" id="9804088at2"/>
<dbReference type="BioCyc" id="ASP62977:ACIAD_RS14005-MONOMER"/>
<dbReference type="UniPathway" id="UPA00047">
    <property type="reaction ID" value="UER00056"/>
</dbReference>
<dbReference type="UniPathway" id="UPA00049">
    <property type="reaction ID" value="UER00060"/>
</dbReference>
<dbReference type="Proteomes" id="UP000000430">
    <property type="component" value="Chromosome"/>
</dbReference>
<dbReference type="GO" id="GO:0005829">
    <property type="term" value="C:cytosol"/>
    <property type="evidence" value="ECO:0007669"/>
    <property type="project" value="TreeGrafter"/>
</dbReference>
<dbReference type="GO" id="GO:0004455">
    <property type="term" value="F:ketol-acid reductoisomerase activity"/>
    <property type="evidence" value="ECO:0007669"/>
    <property type="project" value="UniProtKB-UniRule"/>
</dbReference>
<dbReference type="GO" id="GO:0000287">
    <property type="term" value="F:magnesium ion binding"/>
    <property type="evidence" value="ECO:0007669"/>
    <property type="project" value="UniProtKB-UniRule"/>
</dbReference>
<dbReference type="GO" id="GO:0050661">
    <property type="term" value="F:NADP binding"/>
    <property type="evidence" value="ECO:0007669"/>
    <property type="project" value="InterPro"/>
</dbReference>
<dbReference type="GO" id="GO:0009097">
    <property type="term" value="P:isoleucine biosynthetic process"/>
    <property type="evidence" value="ECO:0007669"/>
    <property type="project" value="UniProtKB-UniRule"/>
</dbReference>
<dbReference type="GO" id="GO:0009099">
    <property type="term" value="P:L-valine biosynthetic process"/>
    <property type="evidence" value="ECO:0007669"/>
    <property type="project" value="UniProtKB-UniRule"/>
</dbReference>
<dbReference type="FunFam" id="3.40.50.720:FF:000023">
    <property type="entry name" value="Ketol-acid reductoisomerase (NADP(+))"/>
    <property type="match status" value="1"/>
</dbReference>
<dbReference type="Gene3D" id="6.10.240.10">
    <property type="match status" value="1"/>
</dbReference>
<dbReference type="Gene3D" id="3.40.50.720">
    <property type="entry name" value="NAD(P)-binding Rossmann-like Domain"/>
    <property type="match status" value="1"/>
</dbReference>
<dbReference type="HAMAP" id="MF_00435">
    <property type="entry name" value="IlvC"/>
    <property type="match status" value="1"/>
</dbReference>
<dbReference type="InterPro" id="IPR008927">
    <property type="entry name" value="6-PGluconate_DH-like_C_sf"/>
</dbReference>
<dbReference type="InterPro" id="IPR013023">
    <property type="entry name" value="KARI"/>
</dbReference>
<dbReference type="InterPro" id="IPR000506">
    <property type="entry name" value="KARI_C"/>
</dbReference>
<dbReference type="InterPro" id="IPR013116">
    <property type="entry name" value="KARI_N"/>
</dbReference>
<dbReference type="InterPro" id="IPR014359">
    <property type="entry name" value="KARI_prok"/>
</dbReference>
<dbReference type="InterPro" id="IPR036291">
    <property type="entry name" value="NAD(P)-bd_dom_sf"/>
</dbReference>
<dbReference type="NCBIfam" id="TIGR00465">
    <property type="entry name" value="ilvC"/>
    <property type="match status" value="1"/>
</dbReference>
<dbReference type="NCBIfam" id="NF004017">
    <property type="entry name" value="PRK05479.1"/>
    <property type="match status" value="1"/>
</dbReference>
<dbReference type="NCBIfam" id="NF009940">
    <property type="entry name" value="PRK13403.1"/>
    <property type="match status" value="1"/>
</dbReference>
<dbReference type="PANTHER" id="PTHR21371">
    <property type="entry name" value="KETOL-ACID REDUCTOISOMERASE, MITOCHONDRIAL"/>
    <property type="match status" value="1"/>
</dbReference>
<dbReference type="PANTHER" id="PTHR21371:SF1">
    <property type="entry name" value="KETOL-ACID REDUCTOISOMERASE, MITOCHONDRIAL"/>
    <property type="match status" value="1"/>
</dbReference>
<dbReference type="Pfam" id="PF01450">
    <property type="entry name" value="KARI_C"/>
    <property type="match status" value="1"/>
</dbReference>
<dbReference type="Pfam" id="PF07991">
    <property type="entry name" value="KARI_N"/>
    <property type="match status" value="1"/>
</dbReference>
<dbReference type="PIRSF" id="PIRSF000116">
    <property type="entry name" value="IlvC_gammaproteo"/>
    <property type="match status" value="1"/>
</dbReference>
<dbReference type="SUPFAM" id="SSF48179">
    <property type="entry name" value="6-phosphogluconate dehydrogenase C-terminal domain-like"/>
    <property type="match status" value="1"/>
</dbReference>
<dbReference type="SUPFAM" id="SSF51735">
    <property type="entry name" value="NAD(P)-binding Rossmann-fold domains"/>
    <property type="match status" value="1"/>
</dbReference>
<dbReference type="PROSITE" id="PS51851">
    <property type="entry name" value="KARI_C"/>
    <property type="match status" value="1"/>
</dbReference>
<dbReference type="PROSITE" id="PS51850">
    <property type="entry name" value="KARI_N"/>
    <property type="match status" value="1"/>
</dbReference>